<gene>
    <name evidence="1" type="primary">lpxA</name>
    <name type="ordered locus">SEN0235</name>
</gene>
<dbReference type="EC" id="2.3.1.129" evidence="1"/>
<dbReference type="EMBL" id="AM933172">
    <property type="protein sequence ID" value="CAR31823.1"/>
    <property type="molecule type" value="Genomic_DNA"/>
</dbReference>
<dbReference type="RefSeq" id="WP_000565950.1">
    <property type="nucleotide sequence ID" value="NC_011294.1"/>
</dbReference>
<dbReference type="SMR" id="B5R420"/>
<dbReference type="KEGG" id="set:SEN0235"/>
<dbReference type="HOGENOM" id="CLU_061249_0_0_6"/>
<dbReference type="UniPathway" id="UPA00359">
    <property type="reaction ID" value="UER00477"/>
</dbReference>
<dbReference type="Proteomes" id="UP000000613">
    <property type="component" value="Chromosome"/>
</dbReference>
<dbReference type="GO" id="GO:0005737">
    <property type="term" value="C:cytoplasm"/>
    <property type="evidence" value="ECO:0007669"/>
    <property type="project" value="UniProtKB-SubCell"/>
</dbReference>
<dbReference type="GO" id="GO:0016020">
    <property type="term" value="C:membrane"/>
    <property type="evidence" value="ECO:0007669"/>
    <property type="project" value="GOC"/>
</dbReference>
<dbReference type="GO" id="GO:0008780">
    <property type="term" value="F:acyl-[acyl-carrier-protein]-UDP-N-acetylglucosamine O-acyltransferase activity"/>
    <property type="evidence" value="ECO:0007669"/>
    <property type="project" value="UniProtKB-UniRule"/>
</dbReference>
<dbReference type="GO" id="GO:0009245">
    <property type="term" value="P:lipid A biosynthetic process"/>
    <property type="evidence" value="ECO:0007669"/>
    <property type="project" value="UniProtKB-UniRule"/>
</dbReference>
<dbReference type="CDD" id="cd03351">
    <property type="entry name" value="LbH_UDP-GlcNAc_AT"/>
    <property type="match status" value="1"/>
</dbReference>
<dbReference type="FunFam" id="2.160.10.10:FF:000003">
    <property type="entry name" value="Acyl-[acyl-carrier-protein]--UDP-N-acetylglucosamine O-acyltransferase"/>
    <property type="match status" value="1"/>
</dbReference>
<dbReference type="Gene3D" id="2.160.10.10">
    <property type="entry name" value="Hexapeptide repeat proteins"/>
    <property type="match status" value="1"/>
</dbReference>
<dbReference type="Gene3D" id="1.20.1180.10">
    <property type="entry name" value="Udp N-acetylglucosamine O-acyltransferase, C-terminal domain"/>
    <property type="match status" value="1"/>
</dbReference>
<dbReference type="HAMAP" id="MF_00387">
    <property type="entry name" value="LpxA"/>
    <property type="match status" value="1"/>
</dbReference>
<dbReference type="InterPro" id="IPR029098">
    <property type="entry name" value="Acetyltransf_C"/>
</dbReference>
<dbReference type="InterPro" id="IPR037157">
    <property type="entry name" value="Acetyltransf_C_sf"/>
</dbReference>
<dbReference type="InterPro" id="IPR001451">
    <property type="entry name" value="Hexapep"/>
</dbReference>
<dbReference type="InterPro" id="IPR018357">
    <property type="entry name" value="Hexapep_transf_CS"/>
</dbReference>
<dbReference type="InterPro" id="IPR010137">
    <property type="entry name" value="Lipid_A_LpxA"/>
</dbReference>
<dbReference type="InterPro" id="IPR011004">
    <property type="entry name" value="Trimer_LpxA-like_sf"/>
</dbReference>
<dbReference type="NCBIfam" id="TIGR01852">
    <property type="entry name" value="lipid_A_lpxA"/>
    <property type="match status" value="1"/>
</dbReference>
<dbReference type="NCBIfam" id="NF003657">
    <property type="entry name" value="PRK05289.1"/>
    <property type="match status" value="1"/>
</dbReference>
<dbReference type="PANTHER" id="PTHR43480">
    <property type="entry name" value="ACYL-[ACYL-CARRIER-PROTEIN]--UDP-N-ACETYLGLUCOSAMINE O-ACYLTRANSFERASE"/>
    <property type="match status" value="1"/>
</dbReference>
<dbReference type="PANTHER" id="PTHR43480:SF1">
    <property type="entry name" value="ACYL-[ACYL-CARRIER-PROTEIN]--UDP-N-ACETYLGLUCOSAMINE O-ACYLTRANSFERASE, MITOCHONDRIAL-RELATED"/>
    <property type="match status" value="1"/>
</dbReference>
<dbReference type="Pfam" id="PF13720">
    <property type="entry name" value="Acetyltransf_11"/>
    <property type="match status" value="1"/>
</dbReference>
<dbReference type="Pfam" id="PF00132">
    <property type="entry name" value="Hexapep"/>
    <property type="match status" value="2"/>
</dbReference>
<dbReference type="PIRSF" id="PIRSF000456">
    <property type="entry name" value="UDP-GlcNAc_acltr"/>
    <property type="match status" value="1"/>
</dbReference>
<dbReference type="SUPFAM" id="SSF51161">
    <property type="entry name" value="Trimeric LpxA-like enzymes"/>
    <property type="match status" value="1"/>
</dbReference>
<dbReference type="PROSITE" id="PS00101">
    <property type="entry name" value="HEXAPEP_TRANSFERASES"/>
    <property type="match status" value="2"/>
</dbReference>
<feature type="chain" id="PRO_1000122727" description="Acyl-[acyl-carrier-protein]--UDP-N-acetylglucosamine O-acyltransferase">
    <location>
        <begin position="1"/>
        <end position="262"/>
    </location>
</feature>
<protein>
    <recommendedName>
        <fullName evidence="1">Acyl-[acyl-carrier-protein]--UDP-N-acetylglucosamine O-acyltransferase</fullName>
        <shortName evidence="1">UDP-N-acetylglucosamine acyltransferase</shortName>
        <ecNumber evidence="1">2.3.1.129</ecNumber>
    </recommendedName>
</protein>
<evidence type="ECO:0000255" key="1">
    <source>
        <dbReference type="HAMAP-Rule" id="MF_00387"/>
    </source>
</evidence>
<reference key="1">
    <citation type="journal article" date="2008" name="Genome Res.">
        <title>Comparative genome analysis of Salmonella enteritidis PT4 and Salmonella gallinarum 287/91 provides insights into evolutionary and host adaptation pathways.</title>
        <authorList>
            <person name="Thomson N.R."/>
            <person name="Clayton D.J."/>
            <person name="Windhorst D."/>
            <person name="Vernikos G."/>
            <person name="Davidson S."/>
            <person name="Churcher C."/>
            <person name="Quail M.A."/>
            <person name="Stevens M."/>
            <person name="Jones M.A."/>
            <person name="Watson M."/>
            <person name="Barron A."/>
            <person name="Layton A."/>
            <person name="Pickard D."/>
            <person name="Kingsley R.A."/>
            <person name="Bignell A."/>
            <person name="Clark L."/>
            <person name="Harris B."/>
            <person name="Ormond D."/>
            <person name="Abdellah Z."/>
            <person name="Brooks K."/>
            <person name="Cherevach I."/>
            <person name="Chillingworth T."/>
            <person name="Woodward J."/>
            <person name="Norberczak H."/>
            <person name="Lord A."/>
            <person name="Arrowsmith C."/>
            <person name="Jagels K."/>
            <person name="Moule S."/>
            <person name="Mungall K."/>
            <person name="Saunders M."/>
            <person name="Whitehead S."/>
            <person name="Chabalgoity J.A."/>
            <person name="Maskell D."/>
            <person name="Humphreys T."/>
            <person name="Roberts M."/>
            <person name="Barrow P.A."/>
            <person name="Dougan G."/>
            <person name="Parkhill J."/>
        </authorList>
    </citation>
    <scope>NUCLEOTIDE SEQUENCE [LARGE SCALE GENOMIC DNA]</scope>
    <source>
        <strain>P125109</strain>
    </source>
</reference>
<name>LPXA_SALEP</name>
<sequence>MIDKSAFIHPTAIVEDGAVIGANAHIGPFCIVGPQVEIGEGTVLKSHVVVNGQTKIGRDNEIYQFASIGEVNQDLKYAGEPTRVEIGDRNRIRESVTIHRGTVQGGGLTKVGSDNLLMINAHVAHDCTVGNRCILANNATLAGHVSVDDFAIIGGMTAVHQFCIIGAHVMVGGCSGVAQDVPPYVIAQGNHATPFGVNIEGLKRRGFSREGLVAIRNAYKLLYRSGKTLDEAKLEIAELAEKHPEVKAFTEFFERSTRGPIR</sequence>
<proteinExistence type="inferred from homology"/>
<organism>
    <name type="scientific">Salmonella enteritidis PT4 (strain P125109)</name>
    <dbReference type="NCBI Taxonomy" id="550537"/>
    <lineage>
        <taxon>Bacteria</taxon>
        <taxon>Pseudomonadati</taxon>
        <taxon>Pseudomonadota</taxon>
        <taxon>Gammaproteobacteria</taxon>
        <taxon>Enterobacterales</taxon>
        <taxon>Enterobacteriaceae</taxon>
        <taxon>Salmonella</taxon>
    </lineage>
</organism>
<accession>B5R420</accession>
<comment type="function">
    <text evidence="1">Involved in the biosynthesis of lipid A, a phosphorylated glycolipid that anchors the lipopolysaccharide to the outer membrane of the cell.</text>
</comment>
<comment type="catalytic activity">
    <reaction evidence="1">
        <text>a (3R)-hydroxyacyl-[ACP] + UDP-N-acetyl-alpha-D-glucosamine = a UDP-3-O-[(3R)-3-hydroxyacyl]-N-acetyl-alpha-D-glucosamine + holo-[ACP]</text>
        <dbReference type="Rhea" id="RHEA:67812"/>
        <dbReference type="Rhea" id="RHEA-COMP:9685"/>
        <dbReference type="Rhea" id="RHEA-COMP:9945"/>
        <dbReference type="ChEBI" id="CHEBI:57705"/>
        <dbReference type="ChEBI" id="CHEBI:64479"/>
        <dbReference type="ChEBI" id="CHEBI:78827"/>
        <dbReference type="ChEBI" id="CHEBI:173225"/>
        <dbReference type="EC" id="2.3.1.129"/>
    </reaction>
</comment>
<comment type="pathway">
    <text evidence="1">Glycolipid biosynthesis; lipid IV(A) biosynthesis; lipid IV(A) from (3R)-3-hydroxytetradecanoyl-[acyl-carrier-protein] and UDP-N-acetyl-alpha-D-glucosamine: step 1/6.</text>
</comment>
<comment type="subunit">
    <text evidence="1">Homotrimer.</text>
</comment>
<comment type="subcellular location">
    <subcellularLocation>
        <location evidence="1">Cytoplasm</location>
    </subcellularLocation>
</comment>
<comment type="similarity">
    <text evidence="1">Belongs to the transferase hexapeptide repeat family. LpxA subfamily.</text>
</comment>
<keyword id="KW-0012">Acyltransferase</keyword>
<keyword id="KW-0963">Cytoplasm</keyword>
<keyword id="KW-0441">Lipid A biosynthesis</keyword>
<keyword id="KW-0444">Lipid biosynthesis</keyword>
<keyword id="KW-0443">Lipid metabolism</keyword>
<keyword id="KW-0677">Repeat</keyword>
<keyword id="KW-0808">Transferase</keyword>